<feature type="chain" id="PRO_0000160456" description="ATP-dependent Clp protease ATP-binding subunit ClpX">
    <location>
        <begin position="1"/>
        <end position="425"/>
    </location>
</feature>
<feature type="domain" description="ClpX-type ZB" evidence="2">
    <location>
        <begin position="1"/>
        <end position="55"/>
    </location>
</feature>
<feature type="binding site" evidence="2">
    <location>
        <position position="10"/>
    </location>
    <ligand>
        <name>Zn(2+)</name>
        <dbReference type="ChEBI" id="CHEBI:29105"/>
    </ligand>
</feature>
<feature type="binding site" evidence="2">
    <location>
        <position position="13"/>
    </location>
    <ligand>
        <name>Zn(2+)</name>
        <dbReference type="ChEBI" id="CHEBI:29105"/>
    </ligand>
</feature>
<feature type="binding site" evidence="2">
    <location>
        <position position="36"/>
    </location>
    <ligand>
        <name>Zn(2+)</name>
        <dbReference type="ChEBI" id="CHEBI:29105"/>
    </ligand>
</feature>
<feature type="binding site" evidence="2">
    <location>
        <position position="39"/>
    </location>
    <ligand>
        <name>Zn(2+)</name>
        <dbReference type="ChEBI" id="CHEBI:29105"/>
    </ligand>
</feature>
<feature type="binding site" evidence="1">
    <location>
        <begin position="123"/>
        <end position="130"/>
    </location>
    <ligand>
        <name>ATP</name>
        <dbReference type="ChEBI" id="CHEBI:30616"/>
    </ligand>
</feature>
<gene>
    <name evidence="1" type="primary">clpX</name>
    <name type="ordered locus">WD_0318</name>
</gene>
<organism>
    <name type="scientific">Wolbachia pipientis wMel</name>
    <dbReference type="NCBI Taxonomy" id="163164"/>
    <lineage>
        <taxon>Bacteria</taxon>
        <taxon>Pseudomonadati</taxon>
        <taxon>Pseudomonadota</taxon>
        <taxon>Alphaproteobacteria</taxon>
        <taxon>Rickettsiales</taxon>
        <taxon>Anaplasmataceae</taxon>
        <taxon>Wolbachieae</taxon>
        <taxon>Wolbachia</taxon>
    </lineage>
</organism>
<comment type="function">
    <text evidence="1">ATP-dependent specificity component of the Clp protease. It directs the protease to specific substrates. Can perform chaperone functions in the absence of ClpP.</text>
</comment>
<comment type="subunit">
    <text evidence="1">Component of the ClpX-ClpP complex. Forms a hexameric ring that, in the presence of ATP, binds to fourteen ClpP subunits assembled into a disk-like structure with a central cavity, resembling the structure of eukaryotic proteasomes.</text>
</comment>
<comment type="similarity">
    <text evidence="1">Belongs to the ClpX chaperone family.</text>
</comment>
<reference key="1">
    <citation type="journal article" date="2004" name="PLoS Biol.">
        <title>Phylogenomics of the reproductive parasite Wolbachia pipientis wMel: a streamlined genome overrun by mobile genetic elements.</title>
        <authorList>
            <person name="Wu M."/>
            <person name="Sun L.V."/>
            <person name="Vamathevan J.J."/>
            <person name="Riegler M."/>
            <person name="DeBoy R.T."/>
            <person name="Brownlie J.C."/>
            <person name="McGraw E.A."/>
            <person name="Martin W."/>
            <person name="Esser C."/>
            <person name="Ahmadinejad N."/>
            <person name="Wiegand C."/>
            <person name="Madupu R."/>
            <person name="Beanan M.J."/>
            <person name="Brinkac L.M."/>
            <person name="Daugherty S.C."/>
            <person name="Durkin A.S."/>
            <person name="Kolonay J.F."/>
            <person name="Nelson W.C."/>
            <person name="Mohamoud Y."/>
            <person name="Lee P."/>
            <person name="Berry K.J."/>
            <person name="Young M.B."/>
            <person name="Utterback T.R."/>
            <person name="Weidman J.F."/>
            <person name="Nierman W.C."/>
            <person name="Paulsen I.T."/>
            <person name="Nelson K.E."/>
            <person name="Tettelin H."/>
            <person name="O'Neill S.L."/>
            <person name="Eisen J.A."/>
        </authorList>
    </citation>
    <scope>NUCLEOTIDE SEQUENCE [LARGE SCALE GENOMIC DNA]</scope>
</reference>
<proteinExistence type="inferred from homology"/>
<evidence type="ECO:0000255" key="1">
    <source>
        <dbReference type="HAMAP-Rule" id="MF_00175"/>
    </source>
</evidence>
<evidence type="ECO:0000255" key="2">
    <source>
        <dbReference type="PROSITE-ProRule" id="PRU01250"/>
    </source>
</evidence>
<keyword id="KW-0067">ATP-binding</keyword>
<keyword id="KW-0143">Chaperone</keyword>
<keyword id="KW-0479">Metal-binding</keyword>
<keyword id="KW-0547">Nucleotide-binding</keyword>
<keyword id="KW-0862">Zinc</keyword>
<sequence length="425" mass="46709">MDNNNDLHYCSFCNKAQDEVDKLITNSSDGLKVFICNECIELSHKAISQKKDRSFNSDRISDMKLLLKKPEDIKNFLSKHVVGQKHAQHVLSVAMYNHCQSMVQFHAISDIEIEKSNIMLIGPTGSGKTLLAKTLAKVSDVPFAMADATTLTEAGYVGDDVESVLSRLLQAANYDVVKAQRGIVFIDEIDKITRKSEGTSITRDVSGEGVQQALLKIMEGTVAYVPPQGGRKHPQQEFIQVDTSNILFICGGAFEGLDKIIEARKKGTSVGFGADISQSKEQKKKNALHDVQPEDLIKFGLIPEFVGRVPITAVLDELDHEDLIHVLTEPRNALIKQYKALLAFSKVNLEFSDEAISAIAKKAISYKTGARMLRAILESLLLDIMYTSGNGGFEGSTIVITKKMVELGKATVNHNNNGNVITVND</sequence>
<accession>Q73I60</accession>
<dbReference type="EMBL" id="AE017196">
    <property type="protein sequence ID" value="AAS14052.1"/>
    <property type="molecule type" value="Genomic_DNA"/>
</dbReference>
<dbReference type="RefSeq" id="WP_010962512.1">
    <property type="nucleotide sequence ID" value="NZ_OX384529.1"/>
</dbReference>
<dbReference type="SMR" id="Q73I60"/>
<dbReference type="EnsemblBacteria" id="AAS14052">
    <property type="protein sequence ID" value="AAS14052"/>
    <property type="gene ID" value="WD_0318"/>
</dbReference>
<dbReference type="GeneID" id="70035808"/>
<dbReference type="KEGG" id="wol:WD_0318"/>
<dbReference type="eggNOG" id="COG1219">
    <property type="taxonomic scope" value="Bacteria"/>
</dbReference>
<dbReference type="Proteomes" id="UP000008215">
    <property type="component" value="Chromosome"/>
</dbReference>
<dbReference type="GO" id="GO:0009376">
    <property type="term" value="C:HslUV protease complex"/>
    <property type="evidence" value="ECO:0007669"/>
    <property type="project" value="TreeGrafter"/>
</dbReference>
<dbReference type="GO" id="GO:0005524">
    <property type="term" value="F:ATP binding"/>
    <property type="evidence" value="ECO:0007669"/>
    <property type="project" value="UniProtKB-UniRule"/>
</dbReference>
<dbReference type="GO" id="GO:0016887">
    <property type="term" value="F:ATP hydrolysis activity"/>
    <property type="evidence" value="ECO:0007669"/>
    <property type="project" value="InterPro"/>
</dbReference>
<dbReference type="GO" id="GO:0140662">
    <property type="term" value="F:ATP-dependent protein folding chaperone"/>
    <property type="evidence" value="ECO:0007669"/>
    <property type="project" value="InterPro"/>
</dbReference>
<dbReference type="GO" id="GO:0046983">
    <property type="term" value="F:protein dimerization activity"/>
    <property type="evidence" value="ECO:0007669"/>
    <property type="project" value="InterPro"/>
</dbReference>
<dbReference type="GO" id="GO:0051082">
    <property type="term" value="F:unfolded protein binding"/>
    <property type="evidence" value="ECO:0007669"/>
    <property type="project" value="UniProtKB-UniRule"/>
</dbReference>
<dbReference type="GO" id="GO:0008270">
    <property type="term" value="F:zinc ion binding"/>
    <property type="evidence" value="ECO:0007669"/>
    <property type="project" value="InterPro"/>
</dbReference>
<dbReference type="GO" id="GO:0051301">
    <property type="term" value="P:cell division"/>
    <property type="evidence" value="ECO:0007669"/>
    <property type="project" value="TreeGrafter"/>
</dbReference>
<dbReference type="GO" id="GO:0051603">
    <property type="term" value="P:proteolysis involved in protein catabolic process"/>
    <property type="evidence" value="ECO:0007669"/>
    <property type="project" value="TreeGrafter"/>
</dbReference>
<dbReference type="CDD" id="cd19497">
    <property type="entry name" value="RecA-like_ClpX"/>
    <property type="match status" value="1"/>
</dbReference>
<dbReference type="FunFam" id="1.10.8.60:FF:000002">
    <property type="entry name" value="ATP-dependent Clp protease ATP-binding subunit ClpX"/>
    <property type="match status" value="1"/>
</dbReference>
<dbReference type="FunFam" id="3.40.50.300:FF:000005">
    <property type="entry name" value="ATP-dependent Clp protease ATP-binding subunit ClpX"/>
    <property type="match status" value="1"/>
</dbReference>
<dbReference type="Gene3D" id="1.10.8.60">
    <property type="match status" value="1"/>
</dbReference>
<dbReference type="Gene3D" id="6.20.220.10">
    <property type="entry name" value="ClpX chaperone, C4-type zinc finger domain"/>
    <property type="match status" value="1"/>
</dbReference>
<dbReference type="Gene3D" id="3.40.50.300">
    <property type="entry name" value="P-loop containing nucleotide triphosphate hydrolases"/>
    <property type="match status" value="1"/>
</dbReference>
<dbReference type="HAMAP" id="MF_00175">
    <property type="entry name" value="ClpX"/>
    <property type="match status" value="1"/>
</dbReference>
<dbReference type="InterPro" id="IPR003593">
    <property type="entry name" value="AAA+_ATPase"/>
</dbReference>
<dbReference type="InterPro" id="IPR050052">
    <property type="entry name" value="ATP-dep_Clp_protease_ClpX"/>
</dbReference>
<dbReference type="InterPro" id="IPR003959">
    <property type="entry name" value="ATPase_AAA_core"/>
</dbReference>
<dbReference type="InterPro" id="IPR019489">
    <property type="entry name" value="Clp_ATPase_C"/>
</dbReference>
<dbReference type="InterPro" id="IPR004487">
    <property type="entry name" value="Clp_protease_ATP-bd_su_ClpX"/>
</dbReference>
<dbReference type="InterPro" id="IPR046425">
    <property type="entry name" value="ClpX_bact"/>
</dbReference>
<dbReference type="InterPro" id="IPR027417">
    <property type="entry name" value="P-loop_NTPase"/>
</dbReference>
<dbReference type="InterPro" id="IPR010603">
    <property type="entry name" value="Znf_CppX_C4"/>
</dbReference>
<dbReference type="InterPro" id="IPR038366">
    <property type="entry name" value="Znf_CppX_C4_sf"/>
</dbReference>
<dbReference type="NCBIfam" id="TIGR00382">
    <property type="entry name" value="clpX"/>
    <property type="match status" value="1"/>
</dbReference>
<dbReference type="NCBIfam" id="NF003745">
    <property type="entry name" value="PRK05342.1"/>
    <property type="match status" value="1"/>
</dbReference>
<dbReference type="PANTHER" id="PTHR48102:SF7">
    <property type="entry name" value="ATP-DEPENDENT CLP PROTEASE ATP-BINDING SUBUNIT CLPX-LIKE, MITOCHONDRIAL"/>
    <property type="match status" value="1"/>
</dbReference>
<dbReference type="PANTHER" id="PTHR48102">
    <property type="entry name" value="ATP-DEPENDENT CLP PROTEASE ATP-BINDING SUBUNIT CLPX-LIKE, MITOCHONDRIAL-RELATED"/>
    <property type="match status" value="1"/>
</dbReference>
<dbReference type="Pfam" id="PF07724">
    <property type="entry name" value="AAA_2"/>
    <property type="match status" value="1"/>
</dbReference>
<dbReference type="Pfam" id="PF10431">
    <property type="entry name" value="ClpB_D2-small"/>
    <property type="match status" value="1"/>
</dbReference>
<dbReference type="Pfam" id="PF06689">
    <property type="entry name" value="zf-C4_ClpX"/>
    <property type="match status" value="1"/>
</dbReference>
<dbReference type="SMART" id="SM00382">
    <property type="entry name" value="AAA"/>
    <property type="match status" value="1"/>
</dbReference>
<dbReference type="SMART" id="SM01086">
    <property type="entry name" value="ClpB_D2-small"/>
    <property type="match status" value="1"/>
</dbReference>
<dbReference type="SMART" id="SM00994">
    <property type="entry name" value="zf-C4_ClpX"/>
    <property type="match status" value="1"/>
</dbReference>
<dbReference type="SUPFAM" id="SSF57716">
    <property type="entry name" value="Glucocorticoid receptor-like (DNA-binding domain)"/>
    <property type="match status" value="1"/>
</dbReference>
<dbReference type="SUPFAM" id="SSF52540">
    <property type="entry name" value="P-loop containing nucleoside triphosphate hydrolases"/>
    <property type="match status" value="1"/>
</dbReference>
<dbReference type="PROSITE" id="PS51902">
    <property type="entry name" value="CLPX_ZB"/>
    <property type="match status" value="1"/>
</dbReference>
<protein>
    <recommendedName>
        <fullName evidence="1">ATP-dependent Clp protease ATP-binding subunit ClpX</fullName>
    </recommendedName>
</protein>
<name>CLPX_WOLPM</name>